<sequence length="676" mass="75614">MTQVAKKILVTCALPYANGSIHLGHMLEHVQADIWVRYQRMRGNQVHFICADDAHGTPIMLKAQQMGIAPEQMIAAMSQEHQQDFAGFNISYDNYHSTHSEENRELSGLIYGRLKENGFIKNRTISQLYDPEKGMFLPDRFVKGTCPKCKAADQYGDNCEVCGATYSTTELIEPKSAVSGATPEMRESEHFFFDLPAFSDMLQAWTRSGALQEQVANKMQEWFDSGLQQWDITRDAPYFGFEVPDAPGKYFYVWLDAPIGYMGSFKNLCDKRGDLNFDDFWKKDSDADLYHFIGKDIVYFHSLFWPAMLEGSGFRKPTNLFVHGYVTVNGAKMSKSRGTFIKAGTYLQHLDADCLRYYYAAKLSSRIDDIDLNLEDFVQRVNADIVNKVVNLASRNAGFISKRFDGKLADKLADAELYKTFTDAGASIAEAYSSRESGRAIREIMALADIANRYVDEQAPWVVAKVEGRDADLQAICSMGINLFRVLMTYLKPVLPALTQRTEAFLNTELSWDAITTPLLSHQVNPFKALFNRIDLDKVSAMVDASKEDMVTAQNVVSGPLADNPVQDTINFDDFAKVDMRIALIKQAELVDGSDKLLRLTLDLGGETRQVFSGIREAYPDPAKLEGRLTVMVANLAPRKMRFGISEGMVMAAGPGGKDIFLLSPDSGAQPGMQVK</sequence>
<protein>
    <recommendedName>
        <fullName evidence="1">Methionine--tRNA ligase</fullName>
        <ecNumber evidence="1">6.1.1.10</ecNumber>
    </recommendedName>
    <alternativeName>
        <fullName evidence="1">Methionyl-tRNA synthetase</fullName>
        <shortName evidence="1">MetRS</shortName>
    </alternativeName>
</protein>
<accession>Q6D7B6</accession>
<feature type="chain" id="PRO_0000139132" description="Methionine--tRNA ligase">
    <location>
        <begin position="1"/>
        <end position="676"/>
    </location>
</feature>
<feature type="domain" description="tRNA-binding" evidence="1">
    <location>
        <begin position="574"/>
        <end position="676"/>
    </location>
</feature>
<feature type="short sequence motif" description="'HIGH' region">
    <location>
        <begin position="15"/>
        <end position="25"/>
    </location>
</feature>
<feature type="short sequence motif" description="'KMSKS' region">
    <location>
        <begin position="332"/>
        <end position="336"/>
    </location>
</feature>
<feature type="binding site" evidence="1">
    <location>
        <position position="146"/>
    </location>
    <ligand>
        <name>Zn(2+)</name>
        <dbReference type="ChEBI" id="CHEBI:29105"/>
    </ligand>
</feature>
<feature type="binding site" evidence="1">
    <location>
        <position position="149"/>
    </location>
    <ligand>
        <name>Zn(2+)</name>
        <dbReference type="ChEBI" id="CHEBI:29105"/>
    </ligand>
</feature>
<feature type="binding site" evidence="1">
    <location>
        <position position="159"/>
    </location>
    <ligand>
        <name>Zn(2+)</name>
        <dbReference type="ChEBI" id="CHEBI:29105"/>
    </ligand>
</feature>
<feature type="binding site" evidence="1">
    <location>
        <position position="162"/>
    </location>
    <ligand>
        <name>Zn(2+)</name>
        <dbReference type="ChEBI" id="CHEBI:29105"/>
    </ligand>
</feature>
<feature type="binding site" evidence="1">
    <location>
        <position position="335"/>
    </location>
    <ligand>
        <name>ATP</name>
        <dbReference type="ChEBI" id="CHEBI:30616"/>
    </ligand>
</feature>
<comment type="function">
    <text evidence="1">Is required not only for elongation of protein synthesis but also for the initiation of all mRNA translation through initiator tRNA(fMet) aminoacylation.</text>
</comment>
<comment type="catalytic activity">
    <reaction evidence="1">
        <text>tRNA(Met) + L-methionine + ATP = L-methionyl-tRNA(Met) + AMP + diphosphate</text>
        <dbReference type="Rhea" id="RHEA:13481"/>
        <dbReference type="Rhea" id="RHEA-COMP:9667"/>
        <dbReference type="Rhea" id="RHEA-COMP:9698"/>
        <dbReference type="ChEBI" id="CHEBI:30616"/>
        <dbReference type="ChEBI" id="CHEBI:33019"/>
        <dbReference type="ChEBI" id="CHEBI:57844"/>
        <dbReference type="ChEBI" id="CHEBI:78442"/>
        <dbReference type="ChEBI" id="CHEBI:78530"/>
        <dbReference type="ChEBI" id="CHEBI:456215"/>
        <dbReference type="EC" id="6.1.1.10"/>
    </reaction>
</comment>
<comment type="cofactor">
    <cofactor evidence="1">
        <name>Zn(2+)</name>
        <dbReference type="ChEBI" id="CHEBI:29105"/>
    </cofactor>
    <text evidence="1">Binds 1 zinc ion per subunit.</text>
</comment>
<comment type="subunit">
    <text evidence="1">Homodimer.</text>
</comment>
<comment type="subcellular location">
    <subcellularLocation>
        <location evidence="1">Cytoplasm</location>
    </subcellularLocation>
</comment>
<comment type="similarity">
    <text evidence="1">Belongs to the class-I aminoacyl-tRNA synthetase family. MetG type 1 subfamily.</text>
</comment>
<name>SYM_PECAS</name>
<dbReference type="EC" id="6.1.1.10" evidence="1"/>
<dbReference type="EMBL" id="BX950851">
    <property type="protein sequence ID" value="CAG74319.1"/>
    <property type="molecule type" value="Genomic_DNA"/>
</dbReference>
<dbReference type="RefSeq" id="WP_011092993.1">
    <property type="nucleotide sequence ID" value="NC_004547.2"/>
</dbReference>
<dbReference type="SMR" id="Q6D7B6"/>
<dbReference type="STRING" id="218491.ECA1409"/>
<dbReference type="KEGG" id="eca:ECA1409"/>
<dbReference type="PATRIC" id="fig|218491.5.peg.1445"/>
<dbReference type="eggNOG" id="COG0073">
    <property type="taxonomic scope" value="Bacteria"/>
</dbReference>
<dbReference type="eggNOG" id="COG0143">
    <property type="taxonomic scope" value="Bacteria"/>
</dbReference>
<dbReference type="HOGENOM" id="CLU_009710_7_0_6"/>
<dbReference type="OrthoDB" id="9810191at2"/>
<dbReference type="Proteomes" id="UP000007966">
    <property type="component" value="Chromosome"/>
</dbReference>
<dbReference type="GO" id="GO:0005829">
    <property type="term" value="C:cytosol"/>
    <property type="evidence" value="ECO:0007669"/>
    <property type="project" value="TreeGrafter"/>
</dbReference>
<dbReference type="GO" id="GO:0005524">
    <property type="term" value="F:ATP binding"/>
    <property type="evidence" value="ECO:0007669"/>
    <property type="project" value="UniProtKB-UniRule"/>
</dbReference>
<dbReference type="GO" id="GO:0046872">
    <property type="term" value="F:metal ion binding"/>
    <property type="evidence" value="ECO:0007669"/>
    <property type="project" value="UniProtKB-KW"/>
</dbReference>
<dbReference type="GO" id="GO:0004825">
    <property type="term" value="F:methionine-tRNA ligase activity"/>
    <property type="evidence" value="ECO:0007669"/>
    <property type="project" value="UniProtKB-UniRule"/>
</dbReference>
<dbReference type="GO" id="GO:0000049">
    <property type="term" value="F:tRNA binding"/>
    <property type="evidence" value="ECO:0007669"/>
    <property type="project" value="UniProtKB-KW"/>
</dbReference>
<dbReference type="GO" id="GO:0006431">
    <property type="term" value="P:methionyl-tRNA aminoacylation"/>
    <property type="evidence" value="ECO:0007669"/>
    <property type="project" value="UniProtKB-UniRule"/>
</dbReference>
<dbReference type="CDD" id="cd07957">
    <property type="entry name" value="Anticodon_Ia_Met"/>
    <property type="match status" value="1"/>
</dbReference>
<dbReference type="CDD" id="cd00814">
    <property type="entry name" value="MetRS_core"/>
    <property type="match status" value="1"/>
</dbReference>
<dbReference type="CDD" id="cd02800">
    <property type="entry name" value="tRNA_bind_EcMetRS_like"/>
    <property type="match status" value="1"/>
</dbReference>
<dbReference type="FunFam" id="1.10.730.10:FF:000005">
    <property type="entry name" value="Methionine--tRNA ligase"/>
    <property type="match status" value="1"/>
</dbReference>
<dbReference type="FunFam" id="2.20.28.20:FF:000001">
    <property type="entry name" value="Methionine--tRNA ligase"/>
    <property type="match status" value="1"/>
</dbReference>
<dbReference type="FunFam" id="2.40.50.140:FF:000042">
    <property type="entry name" value="Methionine--tRNA ligase"/>
    <property type="match status" value="1"/>
</dbReference>
<dbReference type="Gene3D" id="3.40.50.620">
    <property type="entry name" value="HUPs"/>
    <property type="match status" value="1"/>
</dbReference>
<dbReference type="Gene3D" id="1.10.730.10">
    <property type="entry name" value="Isoleucyl-tRNA Synthetase, Domain 1"/>
    <property type="match status" value="1"/>
</dbReference>
<dbReference type="Gene3D" id="2.20.28.20">
    <property type="entry name" value="Methionyl-tRNA synthetase, Zn-domain"/>
    <property type="match status" value="1"/>
</dbReference>
<dbReference type="Gene3D" id="2.40.50.140">
    <property type="entry name" value="Nucleic acid-binding proteins"/>
    <property type="match status" value="1"/>
</dbReference>
<dbReference type="HAMAP" id="MF_00098">
    <property type="entry name" value="Met_tRNA_synth_type1"/>
    <property type="match status" value="1"/>
</dbReference>
<dbReference type="InterPro" id="IPR001412">
    <property type="entry name" value="aa-tRNA-synth_I_CS"/>
</dbReference>
<dbReference type="InterPro" id="IPR041872">
    <property type="entry name" value="Anticodon_Met"/>
</dbReference>
<dbReference type="InterPro" id="IPR004495">
    <property type="entry name" value="Met-tRNA-synth_bsu_C"/>
</dbReference>
<dbReference type="InterPro" id="IPR023458">
    <property type="entry name" value="Met-tRNA_ligase_1"/>
</dbReference>
<dbReference type="InterPro" id="IPR014758">
    <property type="entry name" value="Met-tRNA_synth"/>
</dbReference>
<dbReference type="InterPro" id="IPR015413">
    <property type="entry name" value="Methionyl/Leucyl_tRNA_Synth"/>
</dbReference>
<dbReference type="InterPro" id="IPR033911">
    <property type="entry name" value="MetRS_core"/>
</dbReference>
<dbReference type="InterPro" id="IPR029038">
    <property type="entry name" value="MetRS_Zn"/>
</dbReference>
<dbReference type="InterPro" id="IPR012340">
    <property type="entry name" value="NA-bd_OB-fold"/>
</dbReference>
<dbReference type="InterPro" id="IPR014729">
    <property type="entry name" value="Rossmann-like_a/b/a_fold"/>
</dbReference>
<dbReference type="InterPro" id="IPR002547">
    <property type="entry name" value="tRNA-bd_dom"/>
</dbReference>
<dbReference type="InterPro" id="IPR009080">
    <property type="entry name" value="tRNAsynth_Ia_anticodon-bd"/>
</dbReference>
<dbReference type="NCBIfam" id="TIGR00398">
    <property type="entry name" value="metG"/>
    <property type="match status" value="1"/>
</dbReference>
<dbReference type="NCBIfam" id="TIGR00399">
    <property type="entry name" value="metG_C_term"/>
    <property type="match status" value="1"/>
</dbReference>
<dbReference type="NCBIfam" id="NF001100">
    <property type="entry name" value="PRK00133.1"/>
    <property type="match status" value="1"/>
</dbReference>
<dbReference type="PANTHER" id="PTHR45765">
    <property type="entry name" value="METHIONINE--TRNA LIGASE"/>
    <property type="match status" value="1"/>
</dbReference>
<dbReference type="PANTHER" id="PTHR45765:SF1">
    <property type="entry name" value="METHIONINE--TRNA LIGASE, CYTOPLASMIC"/>
    <property type="match status" value="1"/>
</dbReference>
<dbReference type="Pfam" id="PF19303">
    <property type="entry name" value="Anticodon_3"/>
    <property type="match status" value="1"/>
</dbReference>
<dbReference type="Pfam" id="PF09334">
    <property type="entry name" value="tRNA-synt_1g"/>
    <property type="match status" value="1"/>
</dbReference>
<dbReference type="Pfam" id="PF01588">
    <property type="entry name" value="tRNA_bind"/>
    <property type="match status" value="1"/>
</dbReference>
<dbReference type="PRINTS" id="PR01041">
    <property type="entry name" value="TRNASYNTHMET"/>
</dbReference>
<dbReference type="SUPFAM" id="SSF47323">
    <property type="entry name" value="Anticodon-binding domain of a subclass of class I aminoacyl-tRNA synthetases"/>
    <property type="match status" value="1"/>
</dbReference>
<dbReference type="SUPFAM" id="SSF57770">
    <property type="entry name" value="Methionyl-tRNA synthetase (MetRS), Zn-domain"/>
    <property type="match status" value="1"/>
</dbReference>
<dbReference type="SUPFAM" id="SSF50249">
    <property type="entry name" value="Nucleic acid-binding proteins"/>
    <property type="match status" value="1"/>
</dbReference>
<dbReference type="SUPFAM" id="SSF52374">
    <property type="entry name" value="Nucleotidylyl transferase"/>
    <property type="match status" value="1"/>
</dbReference>
<dbReference type="PROSITE" id="PS00178">
    <property type="entry name" value="AA_TRNA_LIGASE_I"/>
    <property type="match status" value="1"/>
</dbReference>
<dbReference type="PROSITE" id="PS50886">
    <property type="entry name" value="TRBD"/>
    <property type="match status" value="1"/>
</dbReference>
<organism>
    <name type="scientific">Pectobacterium atrosepticum (strain SCRI 1043 / ATCC BAA-672)</name>
    <name type="common">Erwinia carotovora subsp. atroseptica</name>
    <dbReference type="NCBI Taxonomy" id="218491"/>
    <lineage>
        <taxon>Bacteria</taxon>
        <taxon>Pseudomonadati</taxon>
        <taxon>Pseudomonadota</taxon>
        <taxon>Gammaproteobacteria</taxon>
        <taxon>Enterobacterales</taxon>
        <taxon>Pectobacteriaceae</taxon>
        <taxon>Pectobacterium</taxon>
    </lineage>
</organism>
<keyword id="KW-0030">Aminoacyl-tRNA synthetase</keyword>
<keyword id="KW-0067">ATP-binding</keyword>
<keyword id="KW-0963">Cytoplasm</keyword>
<keyword id="KW-0436">Ligase</keyword>
<keyword id="KW-0479">Metal-binding</keyword>
<keyword id="KW-0547">Nucleotide-binding</keyword>
<keyword id="KW-0648">Protein biosynthesis</keyword>
<keyword id="KW-1185">Reference proteome</keyword>
<keyword id="KW-0694">RNA-binding</keyword>
<keyword id="KW-0820">tRNA-binding</keyword>
<keyword id="KW-0862">Zinc</keyword>
<evidence type="ECO:0000255" key="1">
    <source>
        <dbReference type="HAMAP-Rule" id="MF_00098"/>
    </source>
</evidence>
<reference key="1">
    <citation type="journal article" date="2004" name="Proc. Natl. Acad. Sci. U.S.A.">
        <title>Genome sequence of the enterobacterial phytopathogen Erwinia carotovora subsp. atroseptica and characterization of virulence factors.</title>
        <authorList>
            <person name="Bell K.S."/>
            <person name="Sebaihia M."/>
            <person name="Pritchard L."/>
            <person name="Holden M.T.G."/>
            <person name="Hyman L.J."/>
            <person name="Holeva M.C."/>
            <person name="Thomson N.R."/>
            <person name="Bentley S.D."/>
            <person name="Churcher L.J.C."/>
            <person name="Mungall K."/>
            <person name="Atkin R."/>
            <person name="Bason N."/>
            <person name="Brooks K."/>
            <person name="Chillingworth T."/>
            <person name="Clark K."/>
            <person name="Doggett J."/>
            <person name="Fraser A."/>
            <person name="Hance Z."/>
            <person name="Hauser H."/>
            <person name="Jagels K."/>
            <person name="Moule S."/>
            <person name="Norbertczak H."/>
            <person name="Ormond D."/>
            <person name="Price C."/>
            <person name="Quail M.A."/>
            <person name="Sanders M."/>
            <person name="Walker D."/>
            <person name="Whitehead S."/>
            <person name="Salmond G.P.C."/>
            <person name="Birch P.R.J."/>
            <person name="Parkhill J."/>
            <person name="Toth I.K."/>
        </authorList>
    </citation>
    <scope>NUCLEOTIDE SEQUENCE [LARGE SCALE GENOMIC DNA]</scope>
    <source>
        <strain>SCRI 1043 / ATCC BAA-672</strain>
    </source>
</reference>
<gene>
    <name evidence="1" type="primary">metG</name>
    <name type="ordered locus">ECA1409</name>
</gene>
<proteinExistence type="inferred from homology"/>